<sequence length="220" mass="23004">MKLNKYIDHTLLKQDAKKKQIDSLLSEAREYDFASVCVNPTWVEHAKKGLEGTDVKVCTVVGFPLGATTSAVKAFETKEAIQNGADEIDMVINVGALKSGNLALVESDIRAVVEASGDKLVKVIIEACLLTDQEKVVVCQLAQKAGADFVKTSTGFSTGGATIADVTLMRETVGSDMGVKAAGGARSYADALAFVEAGATRIGTSAGVAILKGELADGDY</sequence>
<proteinExistence type="inferred from homology"/>
<accession>Q97RH2</accession>
<gene>
    <name evidence="1" type="primary">deoC</name>
    <name type="ordered locus">SP_0843</name>
</gene>
<keyword id="KW-0963">Cytoplasm</keyword>
<keyword id="KW-0456">Lyase</keyword>
<keyword id="KW-1185">Reference proteome</keyword>
<keyword id="KW-0704">Schiff base</keyword>
<comment type="function">
    <text evidence="1">Catalyzes a reversible aldol reaction between acetaldehyde and D-glyceraldehyde 3-phosphate to generate 2-deoxy-D-ribose 5-phosphate.</text>
</comment>
<comment type="catalytic activity">
    <reaction evidence="1">
        <text>2-deoxy-D-ribose 5-phosphate = D-glyceraldehyde 3-phosphate + acetaldehyde</text>
        <dbReference type="Rhea" id="RHEA:12821"/>
        <dbReference type="ChEBI" id="CHEBI:15343"/>
        <dbReference type="ChEBI" id="CHEBI:59776"/>
        <dbReference type="ChEBI" id="CHEBI:62877"/>
        <dbReference type="EC" id="4.1.2.4"/>
    </reaction>
</comment>
<comment type="pathway">
    <text evidence="1">Carbohydrate degradation; 2-deoxy-D-ribose 1-phosphate degradation; D-glyceraldehyde 3-phosphate and acetaldehyde from 2-deoxy-alpha-D-ribose 1-phosphate: step 2/2.</text>
</comment>
<comment type="subcellular location">
    <subcellularLocation>
        <location evidence="1">Cytoplasm</location>
    </subcellularLocation>
</comment>
<comment type="similarity">
    <text evidence="1">Belongs to the DeoC/FbaB aldolase family. DeoC type 1 subfamily.</text>
</comment>
<dbReference type="EC" id="4.1.2.4" evidence="1"/>
<dbReference type="EMBL" id="AE005672">
    <property type="protein sequence ID" value="AAK74974.1"/>
    <property type="molecule type" value="Genomic_DNA"/>
</dbReference>
<dbReference type="PIR" id="E95097">
    <property type="entry name" value="E95097"/>
</dbReference>
<dbReference type="RefSeq" id="WP_000773677.1">
    <property type="nucleotide sequence ID" value="NZ_CP155539.1"/>
</dbReference>
<dbReference type="SMR" id="Q97RH2"/>
<dbReference type="PaxDb" id="170187-SP_0843"/>
<dbReference type="EnsemblBacteria" id="AAK74974">
    <property type="protein sequence ID" value="AAK74974"/>
    <property type="gene ID" value="SP_0843"/>
</dbReference>
<dbReference type="KEGG" id="spn:SP_0843"/>
<dbReference type="eggNOG" id="COG0274">
    <property type="taxonomic scope" value="Bacteria"/>
</dbReference>
<dbReference type="PhylomeDB" id="Q97RH2"/>
<dbReference type="BioCyc" id="SPNE170187:G1FZB-862-MONOMER"/>
<dbReference type="UniPathway" id="UPA00002">
    <property type="reaction ID" value="UER00468"/>
</dbReference>
<dbReference type="Proteomes" id="UP000000585">
    <property type="component" value="Chromosome"/>
</dbReference>
<dbReference type="GO" id="GO:0005737">
    <property type="term" value="C:cytoplasm"/>
    <property type="evidence" value="ECO:0007669"/>
    <property type="project" value="UniProtKB-SubCell"/>
</dbReference>
<dbReference type="GO" id="GO:0004139">
    <property type="term" value="F:deoxyribose-phosphate aldolase activity"/>
    <property type="evidence" value="ECO:0007669"/>
    <property type="project" value="UniProtKB-UniRule"/>
</dbReference>
<dbReference type="GO" id="GO:0006018">
    <property type="term" value="P:2-deoxyribose 1-phosphate catabolic process"/>
    <property type="evidence" value="ECO:0007669"/>
    <property type="project" value="UniProtKB-UniRule"/>
</dbReference>
<dbReference type="GO" id="GO:0016052">
    <property type="term" value="P:carbohydrate catabolic process"/>
    <property type="evidence" value="ECO:0007669"/>
    <property type="project" value="TreeGrafter"/>
</dbReference>
<dbReference type="GO" id="GO:0009264">
    <property type="term" value="P:deoxyribonucleotide catabolic process"/>
    <property type="evidence" value="ECO:0007669"/>
    <property type="project" value="InterPro"/>
</dbReference>
<dbReference type="CDD" id="cd00959">
    <property type="entry name" value="DeoC"/>
    <property type="match status" value="1"/>
</dbReference>
<dbReference type="FunFam" id="3.20.20.70:FF:000044">
    <property type="entry name" value="Deoxyribose-phosphate aldolase"/>
    <property type="match status" value="1"/>
</dbReference>
<dbReference type="Gene3D" id="3.20.20.70">
    <property type="entry name" value="Aldolase class I"/>
    <property type="match status" value="1"/>
</dbReference>
<dbReference type="HAMAP" id="MF_00114">
    <property type="entry name" value="DeoC_type1"/>
    <property type="match status" value="1"/>
</dbReference>
<dbReference type="InterPro" id="IPR013785">
    <property type="entry name" value="Aldolase_TIM"/>
</dbReference>
<dbReference type="InterPro" id="IPR011343">
    <property type="entry name" value="DeoC"/>
</dbReference>
<dbReference type="InterPro" id="IPR002915">
    <property type="entry name" value="DeoC/FbaB/LacD_aldolase"/>
</dbReference>
<dbReference type="InterPro" id="IPR028581">
    <property type="entry name" value="DeoC_typeI"/>
</dbReference>
<dbReference type="NCBIfam" id="TIGR00126">
    <property type="entry name" value="deoC"/>
    <property type="match status" value="1"/>
</dbReference>
<dbReference type="PANTHER" id="PTHR10889">
    <property type="entry name" value="DEOXYRIBOSE-PHOSPHATE ALDOLASE"/>
    <property type="match status" value="1"/>
</dbReference>
<dbReference type="PANTHER" id="PTHR10889:SF1">
    <property type="entry name" value="DEOXYRIBOSE-PHOSPHATE ALDOLASE"/>
    <property type="match status" value="1"/>
</dbReference>
<dbReference type="Pfam" id="PF01791">
    <property type="entry name" value="DeoC"/>
    <property type="match status" value="1"/>
</dbReference>
<dbReference type="PIRSF" id="PIRSF001357">
    <property type="entry name" value="DeoC"/>
    <property type="match status" value="1"/>
</dbReference>
<dbReference type="SMART" id="SM01133">
    <property type="entry name" value="DeoC"/>
    <property type="match status" value="1"/>
</dbReference>
<dbReference type="SUPFAM" id="SSF51569">
    <property type="entry name" value="Aldolase"/>
    <property type="match status" value="1"/>
</dbReference>
<feature type="chain" id="PRO_0000057272" description="Deoxyribose-phosphate aldolase">
    <location>
        <begin position="1"/>
        <end position="220"/>
    </location>
</feature>
<feature type="active site" description="Proton donor/acceptor" evidence="1">
    <location>
        <position position="89"/>
    </location>
</feature>
<feature type="active site" description="Schiff-base intermediate with acetaldehyde" evidence="1">
    <location>
        <position position="151"/>
    </location>
</feature>
<feature type="active site" description="Proton donor/acceptor" evidence="1">
    <location>
        <position position="180"/>
    </location>
</feature>
<reference key="1">
    <citation type="journal article" date="2001" name="Science">
        <title>Complete genome sequence of a virulent isolate of Streptococcus pneumoniae.</title>
        <authorList>
            <person name="Tettelin H."/>
            <person name="Nelson K.E."/>
            <person name="Paulsen I.T."/>
            <person name="Eisen J.A."/>
            <person name="Read T.D."/>
            <person name="Peterson S.N."/>
            <person name="Heidelberg J.F."/>
            <person name="DeBoy R.T."/>
            <person name="Haft D.H."/>
            <person name="Dodson R.J."/>
            <person name="Durkin A.S."/>
            <person name="Gwinn M.L."/>
            <person name="Kolonay J.F."/>
            <person name="Nelson W.C."/>
            <person name="Peterson J.D."/>
            <person name="Umayam L.A."/>
            <person name="White O."/>
            <person name="Salzberg S.L."/>
            <person name="Lewis M.R."/>
            <person name="Radune D."/>
            <person name="Holtzapple E.K."/>
            <person name="Khouri H.M."/>
            <person name="Wolf A.M."/>
            <person name="Utterback T.R."/>
            <person name="Hansen C.L."/>
            <person name="McDonald L.A."/>
            <person name="Feldblyum T.V."/>
            <person name="Angiuoli S.V."/>
            <person name="Dickinson T."/>
            <person name="Hickey E.K."/>
            <person name="Holt I.E."/>
            <person name="Loftus B.J."/>
            <person name="Yang F."/>
            <person name="Smith H.O."/>
            <person name="Venter J.C."/>
            <person name="Dougherty B.A."/>
            <person name="Morrison D.A."/>
            <person name="Hollingshead S.K."/>
            <person name="Fraser C.M."/>
        </authorList>
    </citation>
    <scope>NUCLEOTIDE SEQUENCE [LARGE SCALE GENOMIC DNA]</scope>
    <source>
        <strain>ATCC BAA-334 / TIGR4</strain>
    </source>
</reference>
<name>DEOC_STRPN</name>
<evidence type="ECO:0000255" key="1">
    <source>
        <dbReference type="HAMAP-Rule" id="MF_00114"/>
    </source>
</evidence>
<organism>
    <name type="scientific">Streptococcus pneumoniae serotype 4 (strain ATCC BAA-334 / TIGR4)</name>
    <dbReference type="NCBI Taxonomy" id="170187"/>
    <lineage>
        <taxon>Bacteria</taxon>
        <taxon>Bacillati</taxon>
        <taxon>Bacillota</taxon>
        <taxon>Bacilli</taxon>
        <taxon>Lactobacillales</taxon>
        <taxon>Streptococcaceae</taxon>
        <taxon>Streptococcus</taxon>
    </lineage>
</organism>
<protein>
    <recommendedName>
        <fullName evidence="1">Deoxyribose-phosphate aldolase</fullName>
        <shortName evidence="1">DERA</shortName>
        <ecNumber evidence="1">4.1.2.4</ecNumber>
    </recommendedName>
    <alternativeName>
        <fullName evidence="1">2-deoxy-D-ribose 5-phosphate aldolase</fullName>
    </alternativeName>
    <alternativeName>
        <fullName evidence="1">Phosphodeoxyriboaldolase</fullName>
        <shortName evidence="1">Deoxyriboaldolase</shortName>
    </alternativeName>
</protein>